<keyword id="KW-0963">Cytoplasm</keyword>
<keyword id="KW-0274">FAD</keyword>
<keyword id="KW-0285">Flavoprotein</keyword>
<keyword id="KW-0520">NAD</keyword>
<keyword id="KW-1185">Reference proteome</keyword>
<keyword id="KW-0819">tRNA processing</keyword>
<sequence length="635" mass="70987">MTSPQAVEFLDEFEVIVVGAGHAGCEAALASARMGCSTLLLTLNLDKIAWQPCNPAVGAPAKSQLTHEVDALGGEIGKMADRTYLQKRLLNHSRGPAVWALRAQTDKREYAAVMKTIVENQGNLTVREGMVTDLVLGDNDEVVGVQTYFGVAFRCQAVILTTGTFLGGRIWVGDKSMPAGRAGEFAAEGLTETLNQLGFETGRLKTGTPARVDKRSADFSVMEPQPPDQQVRWFSFDPAVWIEREQMNCYITRTTPETHQLIQDNLHLSPVYGGWVDAKGPRYCPSIEDKIVRFADKASHQIFIEPEGRDIPELYIQGFSTGLPEALQLRMLRSLPGLEHCAMLRPAYAVEYDYLPATQCYPTLMTKRIEGLFCAGQINGTTGYEEAAAQGIVAGINAARRVNQQEMLIFPRAESYIGTLIDDLCTKDLREPYRMLTGRSEYRLLLRSDNADQRLTPLGREVGLIDDRRWHLFTRKQATITAEKERLHATRLKERDPAAQAIVQTTGEKIKGSITLSDLLRRPKFHYCDLQQHGLGIETLERSERESVEIEIKYAGYIQRQQRQIEQVSRQEQRKLPENIDYASIETLSMEAREKLAKVRPLTVGQASRIGGVNPSDINALLFYLETLARLSPVS</sequence>
<evidence type="ECO:0000255" key="1">
    <source>
        <dbReference type="HAMAP-Rule" id="MF_00129"/>
    </source>
</evidence>
<name>MNMG_ACAM1</name>
<accession>B0BZY6</accession>
<reference key="1">
    <citation type="journal article" date="2008" name="Proc. Natl. Acad. Sci. U.S.A.">
        <title>Niche adaptation and genome expansion in the chlorophyll d-producing cyanobacterium Acaryochloris marina.</title>
        <authorList>
            <person name="Swingley W.D."/>
            <person name="Chen M."/>
            <person name="Cheung P.C."/>
            <person name="Conrad A.L."/>
            <person name="Dejesa L.C."/>
            <person name="Hao J."/>
            <person name="Honchak B.M."/>
            <person name="Karbach L.E."/>
            <person name="Kurdoglu A."/>
            <person name="Lahiri S."/>
            <person name="Mastrian S.D."/>
            <person name="Miyashita H."/>
            <person name="Page L."/>
            <person name="Ramakrishna P."/>
            <person name="Satoh S."/>
            <person name="Sattley W.M."/>
            <person name="Shimada Y."/>
            <person name="Taylor H.L."/>
            <person name="Tomo T."/>
            <person name="Tsuchiya T."/>
            <person name="Wang Z.T."/>
            <person name="Raymond J."/>
            <person name="Mimuro M."/>
            <person name="Blankenship R.E."/>
            <person name="Touchman J.W."/>
        </authorList>
    </citation>
    <scope>NUCLEOTIDE SEQUENCE [LARGE SCALE GENOMIC DNA]</scope>
    <source>
        <strain>MBIC 11017</strain>
    </source>
</reference>
<feature type="chain" id="PRO_1000076305" description="tRNA uridine 5-carboxymethylaminomethyl modification enzyme MnmG">
    <location>
        <begin position="1"/>
        <end position="635"/>
    </location>
</feature>
<feature type="binding site" evidence="1">
    <location>
        <begin position="19"/>
        <end position="24"/>
    </location>
    <ligand>
        <name>FAD</name>
        <dbReference type="ChEBI" id="CHEBI:57692"/>
    </ligand>
</feature>
<feature type="binding site" evidence="1">
    <location>
        <begin position="280"/>
        <end position="294"/>
    </location>
    <ligand>
        <name>NAD(+)</name>
        <dbReference type="ChEBI" id="CHEBI:57540"/>
    </ligand>
</feature>
<comment type="function">
    <text evidence="1">NAD-binding protein involved in the addition of a carboxymethylaminomethyl (cmnm) group at the wobble position (U34) of certain tRNAs, forming tRNA-cmnm(5)s(2)U34.</text>
</comment>
<comment type="cofactor">
    <cofactor evidence="1">
        <name>FAD</name>
        <dbReference type="ChEBI" id="CHEBI:57692"/>
    </cofactor>
</comment>
<comment type="subunit">
    <text evidence="1">Homodimer. Heterotetramer of two MnmE and two MnmG subunits.</text>
</comment>
<comment type="subcellular location">
    <subcellularLocation>
        <location evidence="1">Cytoplasm</location>
    </subcellularLocation>
</comment>
<comment type="similarity">
    <text evidence="1">Belongs to the MnmG family.</text>
</comment>
<protein>
    <recommendedName>
        <fullName evidence="1">tRNA uridine 5-carboxymethylaminomethyl modification enzyme MnmG</fullName>
    </recommendedName>
    <alternativeName>
        <fullName evidence="1">Glucose-inhibited division protein A</fullName>
    </alternativeName>
</protein>
<dbReference type="EMBL" id="CP000828">
    <property type="protein sequence ID" value="ABW27196.1"/>
    <property type="molecule type" value="Genomic_DNA"/>
</dbReference>
<dbReference type="RefSeq" id="WP_012162672.1">
    <property type="nucleotide sequence ID" value="NC_009925.1"/>
</dbReference>
<dbReference type="SMR" id="B0BZY6"/>
<dbReference type="STRING" id="329726.AM1_2182"/>
<dbReference type="KEGG" id="amr:AM1_2182"/>
<dbReference type="eggNOG" id="COG0445">
    <property type="taxonomic scope" value="Bacteria"/>
</dbReference>
<dbReference type="HOGENOM" id="CLU_007831_2_2_3"/>
<dbReference type="OrthoDB" id="9815560at2"/>
<dbReference type="Proteomes" id="UP000000268">
    <property type="component" value="Chromosome"/>
</dbReference>
<dbReference type="GO" id="GO:0005737">
    <property type="term" value="C:cytoplasm"/>
    <property type="evidence" value="ECO:0007669"/>
    <property type="project" value="UniProtKB-SubCell"/>
</dbReference>
<dbReference type="GO" id="GO:0050660">
    <property type="term" value="F:flavin adenine dinucleotide binding"/>
    <property type="evidence" value="ECO:0007669"/>
    <property type="project" value="UniProtKB-UniRule"/>
</dbReference>
<dbReference type="GO" id="GO:0030488">
    <property type="term" value="P:tRNA methylation"/>
    <property type="evidence" value="ECO:0007669"/>
    <property type="project" value="TreeGrafter"/>
</dbReference>
<dbReference type="GO" id="GO:0002098">
    <property type="term" value="P:tRNA wobble uridine modification"/>
    <property type="evidence" value="ECO:0007669"/>
    <property type="project" value="InterPro"/>
</dbReference>
<dbReference type="FunFam" id="1.10.10.1800:FF:000001">
    <property type="entry name" value="tRNA uridine 5-carboxymethylaminomethyl modification enzyme MnmG"/>
    <property type="match status" value="1"/>
</dbReference>
<dbReference type="FunFam" id="1.10.150.570:FF:000001">
    <property type="entry name" value="tRNA uridine 5-carboxymethylaminomethyl modification enzyme MnmG"/>
    <property type="match status" value="1"/>
</dbReference>
<dbReference type="FunFam" id="3.50.50.60:FF:000094">
    <property type="entry name" value="tRNA uridine 5-carboxymethylaminomethyl modification enzyme MnmG"/>
    <property type="match status" value="1"/>
</dbReference>
<dbReference type="FunFam" id="3.50.50.60:FF:000119">
    <property type="entry name" value="tRNA uridine 5-carboxymethylaminomethyl modification enzyme MnmG"/>
    <property type="match status" value="1"/>
</dbReference>
<dbReference type="Gene3D" id="3.50.50.60">
    <property type="entry name" value="FAD/NAD(P)-binding domain"/>
    <property type="match status" value="2"/>
</dbReference>
<dbReference type="Gene3D" id="1.10.150.570">
    <property type="entry name" value="GidA associated domain, C-terminal subdomain"/>
    <property type="match status" value="1"/>
</dbReference>
<dbReference type="Gene3D" id="1.10.10.1800">
    <property type="entry name" value="tRNA uridine 5-carboxymethylaminomethyl modification enzyme MnmG/GidA"/>
    <property type="match status" value="1"/>
</dbReference>
<dbReference type="HAMAP" id="MF_00129">
    <property type="entry name" value="MnmG_GidA"/>
    <property type="match status" value="1"/>
</dbReference>
<dbReference type="InterPro" id="IPR036188">
    <property type="entry name" value="FAD/NAD-bd_sf"/>
</dbReference>
<dbReference type="InterPro" id="IPR049312">
    <property type="entry name" value="GIDA_C_N"/>
</dbReference>
<dbReference type="InterPro" id="IPR004416">
    <property type="entry name" value="MnmG"/>
</dbReference>
<dbReference type="InterPro" id="IPR002218">
    <property type="entry name" value="MnmG-rel"/>
</dbReference>
<dbReference type="InterPro" id="IPR020595">
    <property type="entry name" value="MnmG-rel_CS"/>
</dbReference>
<dbReference type="InterPro" id="IPR026904">
    <property type="entry name" value="MnmG_C"/>
</dbReference>
<dbReference type="InterPro" id="IPR047001">
    <property type="entry name" value="MnmG_C_subdom"/>
</dbReference>
<dbReference type="InterPro" id="IPR044920">
    <property type="entry name" value="MnmG_C_subdom_sf"/>
</dbReference>
<dbReference type="InterPro" id="IPR040131">
    <property type="entry name" value="MnmG_N"/>
</dbReference>
<dbReference type="NCBIfam" id="TIGR00136">
    <property type="entry name" value="mnmG_gidA"/>
    <property type="match status" value="1"/>
</dbReference>
<dbReference type="PANTHER" id="PTHR11806">
    <property type="entry name" value="GLUCOSE INHIBITED DIVISION PROTEIN A"/>
    <property type="match status" value="1"/>
</dbReference>
<dbReference type="PANTHER" id="PTHR11806:SF0">
    <property type="entry name" value="PROTEIN MTO1 HOMOLOG, MITOCHONDRIAL"/>
    <property type="match status" value="1"/>
</dbReference>
<dbReference type="Pfam" id="PF01134">
    <property type="entry name" value="GIDA"/>
    <property type="match status" value="1"/>
</dbReference>
<dbReference type="Pfam" id="PF21680">
    <property type="entry name" value="GIDA_C_1st"/>
    <property type="match status" value="1"/>
</dbReference>
<dbReference type="Pfam" id="PF13932">
    <property type="entry name" value="SAM_GIDA_C"/>
    <property type="match status" value="1"/>
</dbReference>
<dbReference type="SMART" id="SM01228">
    <property type="entry name" value="GIDA_assoc_3"/>
    <property type="match status" value="1"/>
</dbReference>
<dbReference type="SUPFAM" id="SSF51905">
    <property type="entry name" value="FAD/NAD(P)-binding domain"/>
    <property type="match status" value="1"/>
</dbReference>
<dbReference type="PROSITE" id="PS01280">
    <property type="entry name" value="GIDA_1"/>
    <property type="match status" value="1"/>
</dbReference>
<dbReference type="PROSITE" id="PS01281">
    <property type="entry name" value="GIDA_2"/>
    <property type="match status" value="1"/>
</dbReference>
<organism>
    <name type="scientific">Acaryochloris marina (strain MBIC 11017)</name>
    <dbReference type="NCBI Taxonomy" id="329726"/>
    <lineage>
        <taxon>Bacteria</taxon>
        <taxon>Bacillati</taxon>
        <taxon>Cyanobacteriota</taxon>
        <taxon>Cyanophyceae</taxon>
        <taxon>Acaryochloridales</taxon>
        <taxon>Acaryochloridaceae</taxon>
        <taxon>Acaryochloris</taxon>
    </lineage>
</organism>
<gene>
    <name evidence="1" type="primary">mnmG</name>
    <name evidence="1" type="synonym">gidA</name>
    <name type="ordered locus">AM1_2182</name>
</gene>
<proteinExistence type="inferred from homology"/>